<accession>Q8C0E3</accession>
<accession>A2A862</accession>
<accession>Q6P249</accession>
<accession>Q811J7</accession>
<accession>Q8BVZ8</accession>
<accession>Q8R1K0</accession>
<accession>Q8R3Y1</accession>
<feature type="chain" id="PRO_0000056271" description="E3 ubiquitin-protein ligase TRIM47">
    <location>
        <begin position="1"/>
        <end position="641"/>
    </location>
</feature>
<feature type="domain" description="B30.2/SPRY" evidence="5">
    <location>
        <begin position="413"/>
        <end position="634"/>
    </location>
</feature>
<feature type="zinc finger region" description="RING-type" evidence="4">
    <location>
        <begin position="9"/>
        <end position="58"/>
    </location>
</feature>
<feature type="zinc finger region" description="B box-type" evidence="3">
    <location>
        <begin position="181"/>
        <end position="221"/>
    </location>
</feature>
<feature type="region of interest" description="Disordered" evidence="6">
    <location>
        <begin position="81"/>
        <end position="123"/>
    </location>
</feature>
<feature type="region of interest" description="Disordered" evidence="6">
    <location>
        <begin position="396"/>
        <end position="416"/>
    </location>
</feature>
<feature type="coiled-coil region" evidence="2">
    <location>
        <begin position="305"/>
        <end position="325"/>
    </location>
</feature>
<feature type="compositionally biased region" description="Pro residues" evidence="6">
    <location>
        <begin position="103"/>
        <end position="118"/>
    </location>
</feature>
<feature type="binding site" evidence="3">
    <location>
        <position position="186"/>
    </location>
    <ligand>
        <name>Zn(2+)</name>
        <dbReference type="ChEBI" id="CHEBI:29105"/>
    </ligand>
</feature>
<feature type="binding site" evidence="3">
    <location>
        <position position="189"/>
    </location>
    <ligand>
        <name>Zn(2+)</name>
        <dbReference type="ChEBI" id="CHEBI:29105"/>
    </ligand>
</feature>
<feature type="binding site" evidence="3">
    <location>
        <position position="208"/>
    </location>
    <ligand>
        <name>Zn(2+)</name>
        <dbReference type="ChEBI" id="CHEBI:29105"/>
    </ligand>
</feature>
<feature type="binding site" evidence="3">
    <location>
        <position position="213"/>
    </location>
    <ligand>
        <name>Zn(2+)</name>
        <dbReference type="ChEBI" id="CHEBI:29105"/>
    </ligand>
</feature>
<feature type="modified residue" description="Phosphothreonine" evidence="12">
    <location>
        <position position="72"/>
    </location>
</feature>
<feature type="modified residue" description="Phosphoserine" evidence="12">
    <location>
        <position position="393"/>
    </location>
</feature>
<feature type="modified residue" description="Phosphoserine" evidence="1">
    <location>
        <position position="464"/>
    </location>
</feature>
<feature type="modified residue" description="Omega-N-methylarginine" evidence="1">
    <location>
        <position position="585"/>
    </location>
</feature>
<feature type="modified residue" description="Phosphoserine" evidence="1">
    <location>
        <position position="591"/>
    </location>
</feature>
<feature type="splice variant" id="VSP_011988" description="In isoform 2." evidence="8">
    <original>E</original>
    <variation>EA</variation>
    <location>
        <position position="404"/>
    </location>
</feature>
<feature type="sequence conflict" description="In Ref. 3; AAH64728." evidence="9" ref="3">
    <original>E</original>
    <variation>D</variation>
    <location>
        <position position="297"/>
    </location>
</feature>
<proteinExistence type="evidence at protein level"/>
<reference key="1">
    <citation type="journal article" date="2009" name="PLoS Biol.">
        <title>Lineage-specific biology revealed by a finished genome assembly of the mouse.</title>
        <authorList>
            <person name="Church D.M."/>
            <person name="Goodstadt L."/>
            <person name="Hillier L.W."/>
            <person name="Zody M.C."/>
            <person name="Goldstein S."/>
            <person name="She X."/>
            <person name="Bult C.J."/>
            <person name="Agarwala R."/>
            <person name="Cherry J.L."/>
            <person name="DiCuccio M."/>
            <person name="Hlavina W."/>
            <person name="Kapustin Y."/>
            <person name="Meric P."/>
            <person name="Maglott D."/>
            <person name="Birtle Z."/>
            <person name="Marques A.C."/>
            <person name="Graves T."/>
            <person name="Zhou S."/>
            <person name="Teague B."/>
            <person name="Potamousis K."/>
            <person name="Churas C."/>
            <person name="Place M."/>
            <person name="Herschleb J."/>
            <person name="Runnheim R."/>
            <person name="Forrest D."/>
            <person name="Amos-Landgraf J."/>
            <person name="Schwartz D.C."/>
            <person name="Cheng Z."/>
            <person name="Lindblad-Toh K."/>
            <person name="Eichler E.E."/>
            <person name="Ponting C.P."/>
        </authorList>
    </citation>
    <scope>NUCLEOTIDE SEQUENCE [LARGE SCALE GENOMIC DNA]</scope>
    <source>
        <strain>C57BL/6J</strain>
    </source>
</reference>
<reference key="2">
    <citation type="journal article" date="2005" name="Science">
        <title>The transcriptional landscape of the mammalian genome.</title>
        <authorList>
            <person name="Carninci P."/>
            <person name="Kasukawa T."/>
            <person name="Katayama S."/>
            <person name="Gough J."/>
            <person name="Frith M.C."/>
            <person name="Maeda N."/>
            <person name="Oyama R."/>
            <person name="Ravasi T."/>
            <person name="Lenhard B."/>
            <person name="Wells C."/>
            <person name="Kodzius R."/>
            <person name="Shimokawa K."/>
            <person name="Bajic V.B."/>
            <person name="Brenner S.E."/>
            <person name="Batalov S."/>
            <person name="Forrest A.R."/>
            <person name="Zavolan M."/>
            <person name="Davis M.J."/>
            <person name="Wilming L.G."/>
            <person name="Aidinis V."/>
            <person name="Allen J.E."/>
            <person name="Ambesi-Impiombato A."/>
            <person name="Apweiler R."/>
            <person name="Aturaliya R.N."/>
            <person name="Bailey T.L."/>
            <person name="Bansal M."/>
            <person name="Baxter L."/>
            <person name="Beisel K.W."/>
            <person name="Bersano T."/>
            <person name="Bono H."/>
            <person name="Chalk A.M."/>
            <person name="Chiu K.P."/>
            <person name="Choudhary V."/>
            <person name="Christoffels A."/>
            <person name="Clutterbuck D.R."/>
            <person name="Crowe M.L."/>
            <person name="Dalla E."/>
            <person name="Dalrymple B.P."/>
            <person name="de Bono B."/>
            <person name="Della Gatta G."/>
            <person name="di Bernardo D."/>
            <person name="Down T."/>
            <person name="Engstrom P."/>
            <person name="Fagiolini M."/>
            <person name="Faulkner G."/>
            <person name="Fletcher C.F."/>
            <person name="Fukushima T."/>
            <person name="Furuno M."/>
            <person name="Futaki S."/>
            <person name="Gariboldi M."/>
            <person name="Georgii-Hemming P."/>
            <person name="Gingeras T.R."/>
            <person name="Gojobori T."/>
            <person name="Green R.E."/>
            <person name="Gustincich S."/>
            <person name="Harbers M."/>
            <person name="Hayashi Y."/>
            <person name="Hensch T.K."/>
            <person name="Hirokawa N."/>
            <person name="Hill D."/>
            <person name="Huminiecki L."/>
            <person name="Iacono M."/>
            <person name="Ikeo K."/>
            <person name="Iwama A."/>
            <person name="Ishikawa T."/>
            <person name="Jakt M."/>
            <person name="Kanapin A."/>
            <person name="Katoh M."/>
            <person name="Kawasawa Y."/>
            <person name="Kelso J."/>
            <person name="Kitamura H."/>
            <person name="Kitano H."/>
            <person name="Kollias G."/>
            <person name="Krishnan S.P."/>
            <person name="Kruger A."/>
            <person name="Kummerfeld S.K."/>
            <person name="Kurochkin I.V."/>
            <person name="Lareau L.F."/>
            <person name="Lazarevic D."/>
            <person name="Lipovich L."/>
            <person name="Liu J."/>
            <person name="Liuni S."/>
            <person name="McWilliam S."/>
            <person name="Madan Babu M."/>
            <person name="Madera M."/>
            <person name="Marchionni L."/>
            <person name="Matsuda H."/>
            <person name="Matsuzawa S."/>
            <person name="Miki H."/>
            <person name="Mignone F."/>
            <person name="Miyake S."/>
            <person name="Morris K."/>
            <person name="Mottagui-Tabar S."/>
            <person name="Mulder N."/>
            <person name="Nakano N."/>
            <person name="Nakauchi H."/>
            <person name="Ng P."/>
            <person name="Nilsson R."/>
            <person name="Nishiguchi S."/>
            <person name="Nishikawa S."/>
            <person name="Nori F."/>
            <person name="Ohara O."/>
            <person name="Okazaki Y."/>
            <person name="Orlando V."/>
            <person name="Pang K.C."/>
            <person name="Pavan W.J."/>
            <person name="Pavesi G."/>
            <person name="Pesole G."/>
            <person name="Petrovsky N."/>
            <person name="Piazza S."/>
            <person name="Reed J."/>
            <person name="Reid J.F."/>
            <person name="Ring B.Z."/>
            <person name="Ringwald M."/>
            <person name="Rost B."/>
            <person name="Ruan Y."/>
            <person name="Salzberg S.L."/>
            <person name="Sandelin A."/>
            <person name="Schneider C."/>
            <person name="Schoenbach C."/>
            <person name="Sekiguchi K."/>
            <person name="Semple C.A."/>
            <person name="Seno S."/>
            <person name="Sessa L."/>
            <person name="Sheng Y."/>
            <person name="Shibata Y."/>
            <person name="Shimada H."/>
            <person name="Shimada K."/>
            <person name="Silva D."/>
            <person name="Sinclair B."/>
            <person name="Sperling S."/>
            <person name="Stupka E."/>
            <person name="Sugiura K."/>
            <person name="Sultana R."/>
            <person name="Takenaka Y."/>
            <person name="Taki K."/>
            <person name="Tammoja K."/>
            <person name="Tan S.L."/>
            <person name="Tang S."/>
            <person name="Taylor M.S."/>
            <person name="Tegner J."/>
            <person name="Teichmann S.A."/>
            <person name="Ueda H.R."/>
            <person name="van Nimwegen E."/>
            <person name="Verardo R."/>
            <person name="Wei C.L."/>
            <person name="Yagi K."/>
            <person name="Yamanishi H."/>
            <person name="Zabarovsky E."/>
            <person name="Zhu S."/>
            <person name="Zimmer A."/>
            <person name="Hide W."/>
            <person name="Bult C."/>
            <person name="Grimmond S.M."/>
            <person name="Teasdale R.D."/>
            <person name="Liu E.T."/>
            <person name="Brusic V."/>
            <person name="Quackenbush J."/>
            <person name="Wahlestedt C."/>
            <person name="Mattick J.S."/>
            <person name="Hume D.A."/>
            <person name="Kai C."/>
            <person name="Sasaki D."/>
            <person name="Tomaru Y."/>
            <person name="Fukuda S."/>
            <person name="Kanamori-Katayama M."/>
            <person name="Suzuki M."/>
            <person name="Aoki J."/>
            <person name="Arakawa T."/>
            <person name="Iida J."/>
            <person name="Imamura K."/>
            <person name="Itoh M."/>
            <person name="Kato T."/>
            <person name="Kawaji H."/>
            <person name="Kawagashira N."/>
            <person name="Kawashima T."/>
            <person name="Kojima M."/>
            <person name="Kondo S."/>
            <person name="Konno H."/>
            <person name="Nakano K."/>
            <person name="Ninomiya N."/>
            <person name="Nishio T."/>
            <person name="Okada M."/>
            <person name="Plessy C."/>
            <person name="Shibata K."/>
            <person name="Shiraki T."/>
            <person name="Suzuki S."/>
            <person name="Tagami M."/>
            <person name="Waki K."/>
            <person name="Watahiki A."/>
            <person name="Okamura-Oho Y."/>
            <person name="Suzuki H."/>
            <person name="Kawai J."/>
            <person name="Hayashizaki Y."/>
        </authorList>
    </citation>
    <scope>NUCLEOTIDE SEQUENCE [LARGE SCALE MRNA] OF 5-641 (ISOFORM 1)</scope>
    <source>
        <strain>C57BL/6J</strain>
        <tissue>Eye</tissue>
    </source>
</reference>
<reference key="3">
    <citation type="journal article" date="2004" name="Genome Res.">
        <title>The status, quality, and expansion of the NIH full-length cDNA project: the Mammalian Gene Collection (MGC).</title>
        <authorList>
            <consortium name="The MGC Project Team"/>
        </authorList>
    </citation>
    <scope>NUCLEOTIDE SEQUENCE [LARGE SCALE MRNA] OF 198-641 (ISOFORMS 1 AND 2)</scope>
    <source>
        <strain>C3H/He</strain>
        <tissue>Kidney</tissue>
        <tissue>Mammary gland</tissue>
        <tissue>Osteoblast</tissue>
    </source>
</reference>
<reference key="4">
    <citation type="journal article" date="2010" name="Cell">
        <title>A tissue-specific atlas of mouse protein phosphorylation and expression.</title>
        <authorList>
            <person name="Huttlin E.L."/>
            <person name="Jedrychowski M.P."/>
            <person name="Elias J.E."/>
            <person name="Goswami T."/>
            <person name="Rad R."/>
            <person name="Beausoleil S.A."/>
            <person name="Villen J."/>
            <person name="Haas W."/>
            <person name="Sowa M.E."/>
            <person name="Gygi S.P."/>
        </authorList>
    </citation>
    <scope>PHOSPHORYLATION [LARGE SCALE ANALYSIS] AT THR-72 AND SER-393</scope>
    <scope>IDENTIFICATION BY MASS SPECTROMETRY [LARGE SCALE ANALYSIS]</scope>
    <source>
        <tissue>Brown adipose tissue</tissue>
        <tissue>Lung</tissue>
        <tissue>Spleen</tissue>
        <tissue>Testis</tissue>
    </source>
</reference>
<reference key="5">
    <citation type="journal article" date="2018" name="Nat. Med.">
        <title>The deubiquitinating enzyme cylindromatosis mitigates nonalcoholic steatohepatitis.</title>
        <authorList>
            <person name="Ji Y.X."/>
            <person name="Huang Z."/>
            <person name="Yang X."/>
            <person name="Wang X."/>
            <person name="Zhao L.P."/>
            <person name="Wang P.X."/>
            <person name="Zhang X.J."/>
            <person name="Alves-Bezerra M."/>
            <person name="Cai L."/>
            <person name="Zhang P."/>
            <person name="Lu Y.X."/>
            <person name="Bai L."/>
            <person name="Gao M.M."/>
            <person name="Zhao H."/>
            <person name="Tian S."/>
            <person name="Wang Y."/>
            <person name="Huang Z.X."/>
            <person name="Zhu X.Y."/>
            <person name="Zhang Y."/>
            <person name="Gong J."/>
            <person name="She Z.G."/>
            <person name="Li F."/>
            <person name="Cohen D.E."/>
            <person name="Li H."/>
        </authorList>
    </citation>
    <scope>FUNCTION</scope>
    <scope>CATALYTIC ACTIVITY</scope>
    <scope>TISSUE SPECIFICITY</scope>
</reference>
<comment type="function">
    <text evidence="7">E3 ubiquitin-protein ligase that mediates the ubiquitination and proteasomal degradation of CYLD.</text>
</comment>
<comment type="catalytic activity">
    <reaction evidence="10">
        <text>S-ubiquitinyl-[E2 ubiquitin-conjugating enzyme]-L-cysteine + [acceptor protein]-L-lysine = [E2 ubiquitin-conjugating enzyme]-L-cysteine + N(6)-ubiquitinyl-[acceptor protein]-L-lysine.</text>
        <dbReference type="EC" id="2.3.2.27"/>
    </reaction>
</comment>
<comment type="pathway">
    <text evidence="10">Protein modification; protein ubiquitination.</text>
</comment>
<comment type="subcellular location">
    <subcellularLocation>
        <location evidence="1">Cytoplasm</location>
    </subcellularLocation>
    <subcellularLocation>
        <location evidence="1">Nucleus</location>
    </subcellularLocation>
</comment>
<comment type="alternative products">
    <event type="alternative splicing"/>
    <isoform>
        <id>Q8C0E3-1</id>
        <name>1</name>
        <sequence type="displayed"/>
    </isoform>
    <isoform>
        <id>Q8C0E3-2</id>
        <name>2</name>
        <sequence type="described" ref="VSP_011988"/>
    </isoform>
</comment>
<comment type="tissue specificity">
    <text evidence="7">Expressed in hepatocytes, expression is increased in fatty livers.</text>
</comment>
<comment type="similarity">
    <text evidence="9">Belongs to the TRIM/RBCC family.</text>
</comment>
<comment type="sequence caution" evidence="9">
    <conflict type="erroneous initiation">
        <sequence resource="EMBL-CDS" id="BAC27457"/>
    </conflict>
    <text>Truncated N-terminus.</text>
</comment>
<comment type="sequence caution" evidence="9">
    <conflict type="erroneous initiation">
        <sequence resource="EMBL-CDS" id="BAC35997"/>
    </conflict>
    <text>Truncated N-terminus.</text>
</comment>
<name>TRI47_MOUSE</name>
<organism>
    <name type="scientific">Mus musculus</name>
    <name type="common">Mouse</name>
    <dbReference type="NCBI Taxonomy" id="10090"/>
    <lineage>
        <taxon>Eukaryota</taxon>
        <taxon>Metazoa</taxon>
        <taxon>Chordata</taxon>
        <taxon>Craniata</taxon>
        <taxon>Vertebrata</taxon>
        <taxon>Euteleostomi</taxon>
        <taxon>Mammalia</taxon>
        <taxon>Eutheria</taxon>
        <taxon>Euarchontoglires</taxon>
        <taxon>Glires</taxon>
        <taxon>Rodentia</taxon>
        <taxon>Myomorpha</taxon>
        <taxon>Muroidea</taxon>
        <taxon>Muridae</taxon>
        <taxon>Murinae</taxon>
        <taxon>Mus</taxon>
        <taxon>Mus</taxon>
    </lineage>
</organism>
<keyword id="KW-0025">Alternative splicing</keyword>
<keyword id="KW-0175">Coiled coil</keyword>
<keyword id="KW-0963">Cytoplasm</keyword>
<keyword id="KW-0479">Metal-binding</keyword>
<keyword id="KW-0488">Methylation</keyword>
<keyword id="KW-0539">Nucleus</keyword>
<keyword id="KW-0597">Phosphoprotein</keyword>
<keyword id="KW-1185">Reference proteome</keyword>
<keyword id="KW-0808">Transferase</keyword>
<keyword id="KW-0833">Ubl conjugation pathway</keyword>
<keyword id="KW-0862">Zinc</keyword>
<keyword id="KW-0863">Zinc-finger</keyword>
<dbReference type="EC" id="2.3.2.27" evidence="10"/>
<dbReference type="EMBL" id="AL607108">
    <property type="status" value="NOT_ANNOTATED_CDS"/>
    <property type="molecule type" value="Genomic_DNA"/>
</dbReference>
<dbReference type="EMBL" id="AK031572">
    <property type="protein sequence ID" value="BAC27457.1"/>
    <property type="status" value="ALT_INIT"/>
    <property type="molecule type" value="mRNA"/>
</dbReference>
<dbReference type="EMBL" id="AK075838">
    <property type="protein sequence ID" value="BAC35997.1"/>
    <property type="status" value="ALT_INIT"/>
    <property type="molecule type" value="mRNA"/>
</dbReference>
<dbReference type="EMBL" id="BC023393">
    <property type="protein sequence ID" value="AAH23393.1"/>
    <property type="molecule type" value="mRNA"/>
</dbReference>
<dbReference type="EMBL" id="BC024468">
    <property type="protein sequence ID" value="AAH24468.1"/>
    <property type="molecule type" value="mRNA"/>
</dbReference>
<dbReference type="EMBL" id="BC043714">
    <property type="protein sequence ID" value="AAH43714.1"/>
    <property type="molecule type" value="mRNA"/>
</dbReference>
<dbReference type="EMBL" id="BC064728">
    <property type="protein sequence ID" value="AAH64728.1"/>
    <property type="molecule type" value="mRNA"/>
</dbReference>
<dbReference type="CCDS" id="CCDS56822.1">
    <molecule id="Q8C0E3-1"/>
</dbReference>
<dbReference type="CCDS" id="CCDS56823.1">
    <molecule id="Q8C0E3-2"/>
</dbReference>
<dbReference type="RefSeq" id="NP_001192010.1">
    <molecule id="Q8C0E3-2"/>
    <property type="nucleotide sequence ID" value="NM_001205081.1"/>
</dbReference>
<dbReference type="RefSeq" id="NP_766158.3">
    <molecule id="Q8C0E3-1"/>
    <property type="nucleotide sequence ID" value="NM_172570.5"/>
</dbReference>
<dbReference type="SMR" id="Q8C0E3"/>
<dbReference type="BioGRID" id="229890">
    <property type="interactions" value="4"/>
</dbReference>
<dbReference type="FunCoup" id="Q8C0E3">
    <property type="interactions" value="296"/>
</dbReference>
<dbReference type="STRING" id="10090.ENSMUSP00000021120"/>
<dbReference type="GlyGen" id="Q8C0E3">
    <property type="glycosylation" value="1 site"/>
</dbReference>
<dbReference type="iPTMnet" id="Q8C0E3"/>
<dbReference type="PhosphoSitePlus" id="Q8C0E3"/>
<dbReference type="SwissPalm" id="Q8C0E3"/>
<dbReference type="jPOST" id="Q8C0E3"/>
<dbReference type="PaxDb" id="10090-ENSMUSP00000021120"/>
<dbReference type="ProteomicsDB" id="298221">
    <molecule id="Q8C0E3-1"/>
</dbReference>
<dbReference type="ProteomicsDB" id="298222">
    <molecule id="Q8C0E3-2"/>
</dbReference>
<dbReference type="Pumba" id="Q8C0E3"/>
<dbReference type="Antibodypedia" id="32298">
    <property type="antibodies" value="108 antibodies from 22 providers"/>
</dbReference>
<dbReference type="DNASU" id="217333"/>
<dbReference type="Ensembl" id="ENSMUST00000021120.6">
    <molecule id="Q8C0E3-2"/>
    <property type="protein sequence ID" value="ENSMUSP00000021120.6"/>
    <property type="gene ID" value="ENSMUSG00000020773.12"/>
</dbReference>
<dbReference type="Ensembl" id="ENSMUST00000106441.8">
    <molecule id="Q8C0E3-1"/>
    <property type="protein sequence ID" value="ENSMUSP00000102049.2"/>
    <property type="gene ID" value="ENSMUSG00000020773.12"/>
</dbReference>
<dbReference type="GeneID" id="217333"/>
<dbReference type="KEGG" id="mmu:217333"/>
<dbReference type="UCSC" id="uc007mjw.2">
    <molecule id="Q8C0E3-1"/>
    <property type="organism name" value="mouse"/>
</dbReference>
<dbReference type="UCSC" id="uc007mjy.2">
    <molecule id="Q8C0E3-2"/>
    <property type="organism name" value="mouse"/>
</dbReference>
<dbReference type="AGR" id="MGI:1917374"/>
<dbReference type="CTD" id="91107"/>
<dbReference type="MGI" id="MGI:1917374">
    <property type="gene designation" value="Trim47"/>
</dbReference>
<dbReference type="VEuPathDB" id="HostDB:ENSMUSG00000020773"/>
<dbReference type="eggNOG" id="KOG2177">
    <property type="taxonomic scope" value="Eukaryota"/>
</dbReference>
<dbReference type="GeneTree" id="ENSGT00940000154334"/>
<dbReference type="HOGENOM" id="CLU_013137_0_2_1"/>
<dbReference type="InParanoid" id="Q8C0E3"/>
<dbReference type="OMA" id="GWVSMGV"/>
<dbReference type="TreeFam" id="TF351086"/>
<dbReference type="UniPathway" id="UPA00143"/>
<dbReference type="BioGRID-ORCS" id="217333">
    <property type="hits" value="2 hits in 79 CRISPR screens"/>
</dbReference>
<dbReference type="ChiTaRS" id="Trim47">
    <property type="organism name" value="mouse"/>
</dbReference>
<dbReference type="PRO" id="PR:Q8C0E3"/>
<dbReference type="Proteomes" id="UP000000589">
    <property type="component" value="Chromosome 11"/>
</dbReference>
<dbReference type="RNAct" id="Q8C0E3">
    <property type="molecule type" value="protein"/>
</dbReference>
<dbReference type="Bgee" id="ENSMUSG00000020773">
    <property type="expression patterns" value="Expressed in right kidney and 162 other cell types or tissues"/>
</dbReference>
<dbReference type="GO" id="GO:0005829">
    <property type="term" value="C:cytosol"/>
    <property type="evidence" value="ECO:0007669"/>
    <property type="project" value="Ensembl"/>
</dbReference>
<dbReference type="GO" id="GO:0098978">
    <property type="term" value="C:glutamatergic synapse"/>
    <property type="evidence" value="ECO:0007669"/>
    <property type="project" value="Ensembl"/>
</dbReference>
<dbReference type="GO" id="GO:0005634">
    <property type="term" value="C:nucleus"/>
    <property type="evidence" value="ECO:0007669"/>
    <property type="project" value="UniProtKB-SubCell"/>
</dbReference>
<dbReference type="GO" id="GO:0098794">
    <property type="term" value="C:postsynapse"/>
    <property type="evidence" value="ECO:0007669"/>
    <property type="project" value="Ensembl"/>
</dbReference>
<dbReference type="GO" id="GO:0004842">
    <property type="term" value="F:ubiquitin-protein transferase activity"/>
    <property type="evidence" value="ECO:0000315"/>
    <property type="project" value="UniProtKB"/>
</dbReference>
<dbReference type="GO" id="GO:0008270">
    <property type="term" value="F:zinc ion binding"/>
    <property type="evidence" value="ECO:0007669"/>
    <property type="project" value="UniProtKB-KW"/>
</dbReference>
<dbReference type="GO" id="GO:0016567">
    <property type="term" value="P:protein ubiquitination"/>
    <property type="evidence" value="ECO:0000315"/>
    <property type="project" value="UniProtKB"/>
</dbReference>
<dbReference type="GO" id="GO:0150052">
    <property type="term" value="P:regulation of postsynapse assembly"/>
    <property type="evidence" value="ECO:0007669"/>
    <property type="project" value="Ensembl"/>
</dbReference>
<dbReference type="CDD" id="cd19769">
    <property type="entry name" value="Bbox2_TRIM16-like"/>
    <property type="match status" value="1"/>
</dbReference>
<dbReference type="CDD" id="cd16604">
    <property type="entry name" value="RING-HC_TRIM47-like_C-IV"/>
    <property type="match status" value="1"/>
</dbReference>
<dbReference type="CDD" id="cd15808">
    <property type="entry name" value="SPRY_PRY_TRIM47"/>
    <property type="match status" value="1"/>
</dbReference>
<dbReference type="FunFam" id="2.60.120.920:FF:000045">
    <property type="entry name" value="E3 ubiquitin/ISG15 ligase TRIM25"/>
    <property type="match status" value="1"/>
</dbReference>
<dbReference type="FunFam" id="3.30.40.10:FF:000375">
    <property type="entry name" value="tripartite motif-containing protein 47 isoform X1"/>
    <property type="match status" value="1"/>
</dbReference>
<dbReference type="Gene3D" id="2.60.120.920">
    <property type="match status" value="1"/>
</dbReference>
<dbReference type="Gene3D" id="4.10.830.40">
    <property type="match status" value="1"/>
</dbReference>
<dbReference type="Gene3D" id="3.30.160.60">
    <property type="entry name" value="Classic Zinc Finger"/>
    <property type="match status" value="1"/>
</dbReference>
<dbReference type="Gene3D" id="3.30.40.10">
    <property type="entry name" value="Zinc/RING finger domain, C3HC4 (zinc finger)"/>
    <property type="match status" value="1"/>
</dbReference>
<dbReference type="InterPro" id="IPR001870">
    <property type="entry name" value="B30.2/SPRY"/>
</dbReference>
<dbReference type="InterPro" id="IPR043136">
    <property type="entry name" value="B30.2/SPRY_sf"/>
</dbReference>
<dbReference type="InterPro" id="IPR013320">
    <property type="entry name" value="ConA-like_dom_sf"/>
</dbReference>
<dbReference type="InterPro" id="IPR051051">
    <property type="entry name" value="E3_ubiq-ligase_TRIM/RNF"/>
</dbReference>
<dbReference type="InterPro" id="IPR042780">
    <property type="entry name" value="TRIM47_SPRY_PRY"/>
</dbReference>
<dbReference type="InterPro" id="IPR027370">
    <property type="entry name" value="Znf-RING_euk"/>
</dbReference>
<dbReference type="InterPro" id="IPR000315">
    <property type="entry name" value="Znf_B-box"/>
</dbReference>
<dbReference type="InterPro" id="IPR001841">
    <property type="entry name" value="Znf_RING"/>
</dbReference>
<dbReference type="InterPro" id="IPR013083">
    <property type="entry name" value="Znf_RING/FYVE/PHD"/>
</dbReference>
<dbReference type="InterPro" id="IPR017907">
    <property type="entry name" value="Znf_RING_CS"/>
</dbReference>
<dbReference type="PANTHER" id="PTHR25465">
    <property type="entry name" value="B-BOX DOMAIN CONTAINING"/>
    <property type="match status" value="1"/>
</dbReference>
<dbReference type="PANTHER" id="PTHR25465:SF21">
    <property type="entry name" value="E3 UBIQUITIN-PROTEIN LIGASE TRIM47"/>
    <property type="match status" value="1"/>
</dbReference>
<dbReference type="Pfam" id="PF00643">
    <property type="entry name" value="zf-B_box"/>
    <property type="match status" value="1"/>
</dbReference>
<dbReference type="Pfam" id="PF13445">
    <property type="entry name" value="zf-RING_UBOX"/>
    <property type="match status" value="1"/>
</dbReference>
<dbReference type="SMART" id="SM00336">
    <property type="entry name" value="BBOX"/>
    <property type="match status" value="2"/>
</dbReference>
<dbReference type="SMART" id="SM00184">
    <property type="entry name" value="RING"/>
    <property type="match status" value="1"/>
</dbReference>
<dbReference type="SUPFAM" id="SSF57845">
    <property type="entry name" value="B-box zinc-binding domain"/>
    <property type="match status" value="1"/>
</dbReference>
<dbReference type="SUPFAM" id="SSF49899">
    <property type="entry name" value="Concanavalin A-like lectins/glucanases"/>
    <property type="match status" value="1"/>
</dbReference>
<dbReference type="SUPFAM" id="SSF57850">
    <property type="entry name" value="RING/U-box"/>
    <property type="match status" value="1"/>
</dbReference>
<dbReference type="PROSITE" id="PS50188">
    <property type="entry name" value="B302_SPRY"/>
    <property type="match status" value="1"/>
</dbReference>
<dbReference type="PROSITE" id="PS50119">
    <property type="entry name" value="ZF_BBOX"/>
    <property type="match status" value="1"/>
</dbReference>
<dbReference type="PROSITE" id="PS00518">
    <property type="entry name" value="ZF_RING_1"/>
    <property type="match status" value="1"/>
</dbReference>
<dbReference type="PROSITE" id="PS50089">
    <property type="entry name" value="ZF_RING_2"/>
    <property type="match status" value="1"/>
</dbReference>
<protein>
    <recommendedName>
        <fullName evidence="9">E3 ubiquitin-protein ligase TRIM47</fullName>
        <ecNumber evidence="10">2.3.2.27</ecNumber>
    </recommendedName>
    <alternativeName>
        <fullName>Tripartite motif-containing protein 47</fullName>
    </alternativeName>
</protein>
<sequence>MDGSGPFSCPICLEPLREPVTLPCGHNFCLACLGALWPHRSAGGTGGSGGPARCPLCQEPFPDGLQLRKNHTLSELLQLRQGSVPGPMSAPASGSTRGATPEPSAPSAPPPAPEPSAPCAPEQWPAGEEPVRCDACPEGAALPAALSCLSCLASFCSAHLAPHERSPALRGHRLVPPLRRLEESLCPRHLRPLERYCRVERVCLCEACATQDHRGHELVPLEQERALQEVEQSKVLSAAEDRMDELGAGIAQSRRTVALIKSAAVAERERVSQMFAEATATLQSFQNEVMGFIEEGEATMLGRSQGDLRRQEEQRSRLSKARHNLGQVPEADSVSFLQELLALRLALEEGCGPGPGPPRELSFTKSSQVVKAVRDTLISACASQWEQLRGLGSNEDGLQKLGSEDVESQDPDSTSLLESEAPRDYFLKFAYIVDLDSDTADKFLQLFGTKGVKRVLCPINYPESPTRFTHCEQVLGEGALDRGTYYWEVEIIEGWVSVGVMAEGFSPQEPYDRGRLGRNAHSCCLQWNGRGFSVWFCGLEAPLPHAFSPTVGVCLEYADHALAFYAVRDGKLSLLRRLKASRPRRSGALASPTDPFQSRLDSHFSGLFNHRLKPAFFLESVDAHLQIGPLKKSCITVLKRR</sequence>
<evidence type="ECO:0000250" key="1">
    <source>
        <dbReference type="UniProtKB" id="Q96LD4"/>
    </source>
</evidence>
<evidence type="ECO:0000255" key="2"/>
<evidence type="ECO:0000255" key="3">
    <source>
        <dbReference type="PROSITE-ProRule" id="PRU00024"/>
    </source>
</evidence>
<evidence type="ECO:0000255" key="4">
    <source>
        <dbReference type="PROSITE-ProRule" id="PRU00175"/>
    </source>
</evidence>
<evidence type="ECO:0000255" key="5">
    <source>
        <dbReference type="PROSITE-ProRule" id="PRU00548"/>
    </source>
</evidence>
<evidence type="ECO:0000256" key="6">
    <source>
        <dbReference type="SAM" id="MobiDB-lite"/>
    </source>
</evidence>
<evidence type="ECO:0000269" key="7">
    <source>
    </source>
</evidence>
<evidence type="ECO:0000303" key="8">
    <source>
    </source>
</evidence>
<evidence type="ECO:0000305" key="9"/>
<evidence type="ECO:0000305" key="10">
    <source>
    </source>
</evidence>
<evidence type="ECO:0000312" key="11">
    <source>
        <dbReference type="MGI" id="MGI:1917374"/>
    </source>
</evidence>
<evidence type="ECO:0007744" key="12">
    <source>
    </source>
</evidence>
<gene>
    <name evidence="11" type="primary">Trim47</name>
</gene>